<feature type="chain" id="PRO_0000168945" description="Leucine-rich repeat domain-containing protein YddK">
    <location>
        <begin position="1"/>
        <end position="318"/>
    </location>
</feature>
<feature type="repeat" description="LRR 1">
    <location>
        <begin position="109"/>
        <end position="129"/>
    </location>
</feature>
<feature type="repeat" description="LRR 2">
    <location>
        <begin position="130"/>
        <end position="151"/>
    </location>
</feature>
<feature type="repeat" description="LRR 3">
    <location>
        <begin position="153"/>
        <end position="173"/>
    </location>
</feature>
<feature type="repeat" description="LRR 4">
    <location>
        <begin position="174"/>
        <end position="194"/>
    </location>
</feature>
<feature type="repeat" description="LRR 5">
    <location>
        <begin position="195"/>
        <end position="216"/>
    </location>
</feature>
<feature type="repeat" description="LRR 6">
    <location>
        <begin position="217"/>
        <end position="237"/>
    </location>
</feature>
<feature type="repeat" description="LRR 7">
    <location>
        <begin position="238"/>
        <end position="258"/>
    </location>
</feature>
<feature type="repeat" description="LRR 8">
    <location>
        <begin position="260"/>
        <end position="280"/>
    </location>
</feature>
<feature type="repeat" description="LRR 9">
    <location>
        <begin position="284"/>
        <end position="305"/>
    </location>
</feature>
<accession>P76123</accession>
<accession>A0A385XJH4</accession>
<accession>Q2MBA6</accession>
<evidence type="ECO:0000305" key="1"/>
<reference key="1">
    <citation type="journal article" date="1997" name="Science">
        <title>The complete genome sequence of Escherichia coli K-12.</title>
        <authorList>
            <person name="Blattner F.R."/>
            <person name="Plunkett G. III"/>
            <person name="Bloch C.A."/>
            <person name="Perna N.T."/>
            <person name="Burland V."/>
            <person name="Riley M."/>
            <person name="Collado-Vides J."/>
            <person name="Glasner J.D."/>
            <person name="Rode C.K."/>
            <person name="Mayhew G.F."/>
            <person name="Gregor J."/>
            <person name="Davis N.W."/>
            <person name="Kirkpatrick H.A."/>
            <person name="Goeden M.A."/>
            <person name="Rose D.J."/>
            <person name="Mau B."/>
            <person name="Shao Y."/>
        </authorList>
    </citation>
    <scope>NUCLEOTIDE SEQUENCE [LARGE SCALE GENOMIC DNA]</scope>
    <source>
        <strain>K12 / MG1655 / ATCC 47076</strain>
    </source>
</reference>
<reference key="2">
    <citation type="journal article" date="2006" name="Mol. Syst. Biol.">
        <title>Highly accurate genome sequences of Escherichia coli K-12 strains MG1655 and W3110.</title>
        <authorList>
            <person name="Hayashi K."/>
            <person name="Morooka N."/>
            <person name="Yamamoto Y."/>
            <person name="Fujita K."/>
            <person name="Isono K."/>
            <person name="Choi S."/>
            <person name="Ohtsubo E."/>
            <person name="Baba T."/>
            <person name="Wanner B.L."/>
            <person name="Mori H."/>
            <person name="Horiuchi T."/>
        </authorList>
    </citation>
    <scope>NUCLEOTIDE SEQUENCE [LARGE SCALE GENOMIC DNA]</scope>
    <source>
        <strain>K12 / W3110 / ATCC 27325 / DSM 5911</strain>
    </source>
</reference>
<proteinExistence type="predicted"/>
<name>YDDK_ECOLI</name>
<comment type="miscellaneous">
    <text evidence="1">Missing about 125 C-terminal residues compared to orthologs.</text>
</comment>
<organism>
    <name type="scientific">Escherichia coli (strain K12)</name>
    <dbReference type="NCBI Taxonomy" id="83333"/>
    <lineage>
        <taxon>Bacteria</taxon>
        <taxon>Pseudomonadati</taxon>
        <taxon>Pseudomonadota</taxon>
        <taxon>Gammaproteobacteria</taxon>
        <taxon>Enterobacterales</taxon>
        <taxon>Enterobacteriaceae</taxon>
        <taxon>Escherichia</taxon>
    </lineage>
</organism>
<protein>
    <recommendedName>
        <fullName>Leucine-rich repeat domain-containing protein YddK</fullName>
    </recommendedName>
</protein>
<gene>
    <name type="primary">yddK</name>
    <name type="ordered locus">b1471</name>
    <name type="ordered locus">JW1467</name>
</gene>
<keyword id="KW-0433">Leucine-rich repeat</keyword>
<keyword id="KW-1185">Reference proteome</keyword>
<keyword id="KW-0677">Repeat</keyword>
<sequence length="318" mass="36241">MITDLILHNHPRMKTITLNDNHIAHLNAKNTTKLEYLNLSNNNLLPTNDIDQLISSKHLWHVLVNGINNDPLAQMQYWTAVRNIIDDTNEVTIDLSGLNLTTQPPGLQNFTSINLDNNQFTHFDATNYDRLVKLSLNSNALESINFPQGRNVSITHISMNNNALRNIDIDRLSSVTYFSAAHNQLEFVQLESCEWLQYLNLSHNQLTDIVAGNKNELLLLDLSHNKLTSLHNDLFPNLNTLLINNNLLSEIKIFYSNFCNVQTLNAANNQLKYINLDFLTYLPSIKSLRLDNNKITHIDTNNTSDIGTLFPIIKQSKT</sequence>
<dbReference type="EMBL" id="U00096">
    <property type="protein sequence ID" value="AYC08209.1"/>
    <property type="molecule type" value="Genomic_DNA"/>
</dbReference>
<dbReference type="EMBL" id="AP009048">
    <property type="protein sequence ID" value="BAE76450.1"/>
    <property type="molecule type" value="Genomic_DNA"/>
</dbReference>
<dbReference type="PIR" id="B64900">
    <property type="entry name" value="B64900"/>
</dbReference>
<dbReference type="RefSeq" id="WP_001407592.1">
    <property type="nucleotide sequence ID" value="NZ_CP009789.1"/>
</dbReference>
<dbReference type="SMR" id="P76123"/>
<dbReference type="BioGRID" id="4260207">
    <property type="interactions" value="12"/>
</dbReference>
<dbReference type="FunCoup" id="P76123">
    <property type="interactions" value="123"/>
</dbReference>
<dbReference type="EnsemblBacteria" id="AYC08209">
    <property type="protein sequence ID" value="AYC08209"/>
    <property type="gene ID" value="b1471"/>
</dbReference>
<dbReference type="KEGG" id="ecj:JW1467"/>
<dbReference type="EchoBASE" id="EB3544"/>
<dbReference type="eggNOG" id="COG4886">
    <property type="taxonomic scope" value="Bacteria"/>
</dbReference>
<dbReference type="HOGENOM" id="CLU_050217_0_0_6"/>
<dbReference type="InParanoid" id="P76123"/>
<dbReference type="PhylomeDB" id="P76123"/>
<dbReference type="BioCyc" id="EcoCyc:G6772-MONOMER"/>
<dbReference type="PRO" id="PR:P76123"/>
<dbReference type="Proteomes" id="UP000000625">
    <property type="component" value="Chromosome"/>
</dbReference>
<dbReference type="Gene3D" id="3.80.10.10">
    <property type="entry name" value="Ribonuclease Inhibitor"/>
    <property type="match status" value="1"/>
</dbReference>
<dbReference type="InterPro" id="IPR001611">
    <property type="entry name" value="Leu-rich_rpt"/>
</dbReference>
<dbReference type="InterPro" id="IPR032675">
    <property type="entry name" value="LRR_dom_sf"/>
</dbReference>
<dbReference type="InterPro" id="IPR050333">
    <property type="entry name" value="SLRP"/>
</dbReference>
<dbReference type="PANTHER" id="PTHR45712">
    <property type="entry name" value="AGAP008170-PA"/>
    <property type="match status" value="1"/>
</dbReference>
<dbReference type="PANTHER" id="PTHR45712:SF22">
    <property type="entry name" value="INSULIN-LIKE GROWTH FACTOR-BINDING PROTEIN COMPLEX ACID LABILE SUBUNIT"/>
    <property type="match status" value="1"/>
</dbReference>
<dbReference type="Pfam" id="PF00560">
    <property type="entry name" value="LRR_1"/>
    <property type="match status" value="3"/>
</dbReference>
<dbReference type="PRINTS" id="PR00019">
    <property type="entry name" value="LEURICHRPT"/>
</dbReference>
<dbReference type="SUPFAM" id="SSF52058">
    <property type="entry name" value="L domain-like"/>
    <property type="match status" value="1"/>
</dbReference>
<dbReference type="PROSITE" id="PS51450">
    <property type="entry name" value="LRR"/>
    <property type="match status" value="8"/>
</dbReference>